<sequence length="109" mass="11789">MGGLIIEDLQEGFGKEAVKGKEITVHYTGWLENGTKFDSSLDRRQPLTITLGVGQVIKGWDEGFGGMKEGGKRKLTIPSEMGYGAHGAGGVIPPHATLIFEVELLKVYE</sequence>
<accession>P0A0W2</accession>
<accession>P25138</accession>
<protein>
    <recommendedName>
        <fullName>FK506-binding protein</fullName>
        <ecNumber>5.2.1.8</ecNumber>
    </recommendedName>
    <alternativeName>
        <fullName>Peptidyl-prolyl cis-trans isomerase</fullName>
        <shortName>PPIase</shortName>
    </alternativeName>
    <alternativeName>
        <fullName>Rotamase</fullName>
    </alternativeName>
</protein>
<keyword id="KW-0413">Isomerase</keyword>
<keyword id="KW-1185">Reference proteome</keyword>
<keyword id="KW-0697">Rotamase</keyword>
<reference key="1">
    <citation type="journal article" date="1992" name="Proc. Natl. Acad. Sci. U.S.A.">
        <title>Neisseria meningitidis encodes an FK506-inhibitable rotamase.</title>
        <authorList>
            <person name="Sampson B.A."/>
            <person name="Gotschlich E.C."/>
        </authorList>
    </citation>
    <scope>NUCLEOTIDE SEQUENCE [GENOMIC DNA]</scope>
    <scope>CHARACTERIZATION</scope>
    <source>
        <strain>BNCV / Serogroup B</strain>
    </source>
</reference>
<reference key="2">
    <citation type="journal article" date="2000" name="Science">
        <title>Complete genome sequence of Neisseria meningitidis serogroup B strain MC58.</title>
        <authorList>
            <person name="Tettelin H."/>
            <person name="Saunders N.J."/>
            <person name="Heidelberg J.F."/>
            <person name="Jeffries A.C."/>
            <person name="Nelson K.E."/>
            <person name="Eisen J.A."/>
            <person name="Ketchum K.A."/>
            <person name="Hood D.W."/>
            <person name="Peden J.F."/>
            <person name="Dodson R.J."/>
            <person name="Nelson W.C."/>
            <person name="Gwinn M.L."/>
            <person name="DeBoy R.T."/>
            <person name="Peterson J.D."/>
            <person name="Hickey E.K."/>
            <person name="Haft D.H."/>
            <person name="Salzberg S.L."/>
            <person name="White O."/>
            <person name="Fleischmann R.D."/>
            <person name="Dougherty B.A."/>
            <person name="Mason T.M."/>
            <person name="Ciecko A."/>
            <person name="Parksey D.S."/>
            <person name="Blair E."/>
            <person name="Cittone H."/>
            <person name="Clark E.B."/>
            <person name="Cotton M.D."/>
            <person name="Utterback T.R."/>
            <person name="Khouri H.M."/>
            <person name="Qin H."/>
            <person name="Vamathevan J.J."/>
            <person name="Gill J."/>
            <person name="Scarlato V."/>
            <person name="Masignani V."/>
            <person name="Pizza M."/>
            <person name="Grandi G."/>
            <person name="Sun L."/>
            <person name="Smith H.O."/>
            <person name="Fraser C.M."/>
            <person name="Moxon E.R."/>
            <person name="Rappuoli R."/>
            <person name="Venter J.C."/>
        </authorList>
    </citation>
    <scope>NUCLEOTIDE SEQUENCE [LARGE SCALE GENOMIC DNA]</scope>
    <source>
        <strain>ATCC BAA-335 / MC58</strain>
    </source>
</reference>
<organism>
    <name type="scientific">Neisseria meningitidis serogroup B (strain ATCC BAA-335 / MC58)</name>
    <dbReference type="NCBI Taxonomy" id="122586"/>
    <lineage>
        <taxon>Bacteria</taxon>
        <taxon>Pseudomonadati</taxon>
        <taxon>Pseudomonadota</taxon>
        <taxon>Betaproteobacteria</taxon>
        <taxon>Neisseriales</taxon>
        <taxon>Neisseriaceae</taxon>
        <taxon>Neisseria</taxon>
    </lineage>
</organism>
<dbReference type="EC" id="5.2.1.8"/>
<dbReference type="EMBL" id="M97859">
    <property type="protein sequence ID" value="AAA25455.1"/>
    <property type="molecule type" value="Genomic_DNA"/>
</dbReference>
<dbReference type="EMBL" id="AE002098">
    <property type="protein sequence ID" value="AAF40498.1"/>
    <property type="molecule type" value="Genomic_DNA"/>
</dbReference>
<dbReference type="PIR" id="F81245">
    <property type="entry name" value="F81245"/>
</dbReference>
<dbReference type="RefSeq" id="NP_273093.1">
    <property type="nucleotide sequence ID" value="NC_003112.2"/>
</dbReference>
<dbReference type="RefSeq" id="WP_002216146.1">
    <property type="nucleotide sequence ID" value="NC_003112.2"/>
</dbReference>
<dbReference type="SMR" id="P0A0W2"/>
<dbReference type="STRING" id="122586.NMB0027"/>
<dbReference type="PaxDb" id="122586-NMB0027"/>
<dbReference type="KEGG" id="nme:NMB0027"/>
<dbReference type="PATRIC" id="fig|122586.8.peg.38"/>
<dbReference type="HOGENOM" id="CLU_013615_12_0_4"/>
<dbReference type="InParanoid" id="P0A0W2"/>
<dbReference type="OrthoDB" id="280278at2"/>
<dbReference type="Proteomes" id="UP000000425">
    <property type="component" value="Chromosome"/>
</dbReference>
<dbReference type="GO" id="GO:0003755">
    <property type="term" value="F:peptidyl-prolyl cis-trans isomerase activity"/>
    <property type="evidence" value="ECO:0000318"/>
    <property type="project" value="GO_Central"/>
</dbReference>
<dbReference type="GO" id="GO:0006457">
    <property type="term" value="P:protein folding"/>
    <property type="evidence" value="ECO:0007669"/>
    <property type="project" value="UniProtKB-ARBA"/>
</dbReference>
<dbReference type="FunFam" id="3.10.50.40:FF:000006">
    <property type="entry name" value="Peptidyl-prolyl cis-trans isomerase"/>
    <property type="match status" value="1"/>
</dbReference>
<dbReference type="Gene3D" id="3.10.50.40">
    <property type="match status" value="1"/>
</dbReference>
<dbReference type="InterPro" id="IPR046357">
    <property type="entry name" value="PPIase_dom_sf"/>
</dbReference>
<dbReference type="InterPro" id="IPR001179">
    <property type="entry name" value="PPIase_FKBP_dom"/>
</dbReference>
<dbReference type="PANTHER" id="PTHR43811:SF19">
    <property type="entry name" value="39 KDA FK506-BINDING NUCLEAR PROTEIN"/>
    <property type="match status" value="1"/>
</dbReference>
<dbReference type="PANTHER" id="PTHR43811">
    <property type="entry name" value="FKBP-TYPE PEPTIDYL-PROLYL CIS-TRANS ISOMERASE FKPA"/>
    <property type="match status" value="1"/>
</dbReference>
<dbReference type="Pfam" id="PF00254">
    <property type="entry name" value="FKBP_C"/>
    <property type="match status" value="1"/>
</dbReference>
<dbReference type="SUPFAM" id="SSF54534">
    <property type="entry name" value="FKBP-like"/>
    <property type="match status" value="1"/>
</dbReference>
<dbReference type="PROSITE" id="PS50059">
    <property type="entry name" value="FKBP_PPIASE"/>
    <property type="match status" value="1"/>
</dbReference>
<feature type="chain" id="PRO_0000075351" description="FK506-binding protein">
    <location>
        <begin position="1"/>
        <end position="109"/>
    </location>
</feature>
<feature type="domain" description="PPIase FKBP-type" evidence="1">
    <location>
        <begin position="20"/>
        <end position="108"/>
    </location>
</feature>
<feature type="sequence variant" description="In strain: BNCV / Serogroup B.">
    <original>G</original>
    <variation>S</variation>
    <location>
        <position position="3"/>
    </location>
</feature>
<feature type="sequence variant" description="In strain: BNCV / Serogroup B.">
    <original>G</original>
    <variation>S</variation>
    <location>
        <position position="12"/>
    </location>
</feature>
<feature type="sequence variant" description="In strain: BNCV / Serogroup B.">
    <original>N</original>
    <variation>D</variation>
    <location>
        <position position="33"/>
    </location>
</feature>
<name>FKBP_NEIMB</name>
<gene>
    <name type="primary">fbp</name>
    <name type="ordered locus">NMB0027</name>
</gene>
<comment type="function">
    <text>PPIases accelerate the folding of proteins.</text>
</comment>
<comment type="catalytic activity">
    <reaction>
        <text>[protein]-peptidylproline (omega=180) = [protein]-peptidylproline (omega=0)</text>
        <dbReference type="Rhea" id="RHEA:16237"/>
        <dbReference type="Rhea" id="RHEA-COMP:10747"/>
        <dbReference type="Rhea" id="RHEA-COMP:10748"/>
        <dbReference type="ChEBI" id="CHEBI:83833"/>
        <dbReference type="ChEBI" id="CHEBI:83834"/>
        <dbReference type="EC" id="5.2.1.8"/>
    </reaction>
</comment>
<comment type="activity regulation">
    <text>Inhibited by FK506.</text>
</comment>
<comment type="similarity">
    <text evidence="2">Belongs to the FKBP-type PPIase family.</text>
</comment>
<proteinExistence type="evidence at protein level"/>
<evidence type="ECO:0000255" key="1">
    <source>
        <dbReference type="PROSITE-ProRule" id="PRU00277"/>
    </source>
</evidence>
<evidence type="ECO:0000305" key="2"/>